<protein>
    <recommendedName>
        <fullName>Opioid-binding protein/cell adhesion molecule</fullName>
        <shortName>OBCAM</shortName>
        <shortName>OPCML</shortName>
        <shortName>Opioid-binding cell adhesion molecule</shortName>
    </recommendedName>
    <alternativeName>
        <fullName>IgLON family member 1</fullName>
    </alternativeName>
</protein>
<keyword id="KW-0002">3D-structure</keyword>
<keyword id="KW-0025">Alternative splicing</keyword>
<keyword id="KW-0130">Cell adhesion</keyword>
<keyword id="KW-1003">Cell membrane</keyword>
<keyword id="KW-0225">Disease variant</keyword>
<keyword id="KW-1015">Disulfide bond</keyword>
<keyword id="KW-0325">Glycoprotein</keyword>
<keyword id="KW-0336">GPI-anchor</keyword>
<keyword id="KW-0393">Immunoglobulin domain</keyword>
<keyword id="KW-0449">Lipoprotein</keyword>
<keyword id="KW-0472">Membrane</keyword>
<keyword id="KW-1267">Proteomics identification</keyword>
<keyword id="KW-1185">Reference proteome</keyword>
<keyword id="KW-0677">Repeat</keyword>
<keyword id="KW-0732">Signal</keyword>
<gene>
    <name type="primary">OPCML</name>
    <name type="synonym">IGLON1</name>
    <name type="synonym">OBCAM</name>
</gene>
<sequence>MGVCGYLFLPWKCLVVVSLRLLFLVPTGVPVRSGDATFPKAMDNVTVRQGESATLRCTIDDRVTRVAWLNRSTILYAGNDKWSIDPRVIILVNTPTQYSIMIQNVDVYDEGPYTCSVQTDNHPKTSRVHLIVQVPPQIMNISSDITVNEGSSVTLLCLAIGRPEPTVTWRHLSVKEGQGFVSEDEYLEISDIKRDQSGEYECSALNDVAAPDVRKVKITVNYPPYISKAKNTGVSVGQKGILSCEASAVPMAEFQWFKEETRLATGLDGMRIENKGRMSTLTFFNVSEKDYGNYTCVATNKLGNTNASITLYGPGAVIDGVNSASRALACLWLSGTLLAHFFIKF</sequence>
<name>OPCM_HUMAN</name>
<accession>Q14982</accession>
<accession>B2CZX2</accession>
<accession>B7ZLQ1</accession>
<accession>Q17RN7</accession>
<accession>Q7Z3W6</accession>
<dbReference type="EMBL" id="L34774">
    <property type="protein sequence ID" value="AAA36387.1"/>
    <property type="molecule type" value="mRNA"/>
</dbReference>
<dbReference type="EMBL" id="EU562296">
    <property type="protein sequence ID" value="ACB56656.1"/>
    <property type="molecule type" value="mRNA"/>
</dbReference>
<dbReference type="EMBL" id="EU562297">
    <property type="protein sequence ID" value="ACB56657.1"/>
    <property type="molecule type" value="mRNA"/>
</dbReference>
<dbReference type="EMBL" id="EU562299">
    <property type="protein sequence ID" value="ACB56659.1"/>
    <property type="molecule type" value="mRNA"/>
</dbReference>
<dbReference type="EMBL" id="AK299908">
    <property type="protein sequence ID" value="BAG61748.1"/>
    <property type="molecule type" value="mRNA"/>
</dbReference>
<dbReference type="EMBL" id="AK316491">
    <property type="protein sequence ID" value="BAH14862.1"/>
    <property type="molecule type" value="mRNA"/>
</dbReference>
<dbReference type="EMBL" id="BX537377">
    <property type="protein sequence ID" value="CAD97619.1"/>
    <property type="molecule type" value="mRNA"/>
</dbReference>
<dbReference type="EMBL" id="AP000843">
    <property type="status" value="NOT_ANNOTATED_CDS"/>
    <property type="molecule type" value="Genomic_DNA"/>
</dbReference>
<dbReference type="EMBL" id="AP000863">
    <property type="status" value="NOT_ANNOTATED_CDS"/>
    <property type="molecule type" value="Genomic_DNA"/>
</dbReference>
<dbReference type="EMBL" id="AP000903">
    <property type="status" value="NOT_ANNOTATED_CDS"/>
    <property type="molecule type" value="Genomic_DNA"/>
</dbReference>
<dbReference type="EMBL" id="AP003029">
    <property type="status" value="NOT_ANNOTATED_CDS"/>
    <property type="molecule type" value="Genomic_DNA"/>
</dbReference>
<dbReference type="EMBL" id="AP003784">
    <property type="status" value="NOT_ANNOTATED_CDS"/>
    <property type="molecule type" value="Genomic_DNA"/>
</dbReference>
<dbReference type="EMBL" id="AP003972">
    <property type="status" value="NOT_ANNOTATED_CDS"/>
    <property type="molecule type" value="Genomic_DNA"/>
</dbReference>
<dbReference type="EMBL" id="AP004606">
    <property type="status" value="NOT_ANNOTATED_CDS"/>
    <property type="molecule type" value="Genomic_DNA"/>
</dbReference>
<dbReference type="EMBL" id="AP004782">
    <property type="status" value="NOT_ANNOTATED_CDS"/>
    <property type="molecule type" value="Genomic_DNA"/>
</dbReference>
<dbReference type="EMBL" id="AP005122">
    <property type="status" value="NOT_ANNOTATED_CDS"/>
    <property type="molecule type" value="Genomic_DNA"/>
</dbReference>
<dbReference type="EMBL" id="AP005133">
    <property type="status" value="NOT_ANNOTATED_CDS"/>
    <property type="molecule type" value="Genomic_DNA"/>
</dbReference>
<dbReference type="EMBL" id="AP005638">
    <property type="status" value="NOT_ANNOTATED_CDS"/>
    <property type="molecule type" value="Genomic_DNA"/>
</dbReference>
<dbReference type="EMBL" id="BC074773">
    <property type="protein sequence ID" value="AAH74773.1"/>
    <property type="molecule type" value="mRNA"/>
</dbReference>
<dbReference type="EMBL" id="BC117254">
    <property type="protein sequence ID" value="AAI17255.1"/>
    <property type="molecule type" value="mRNA"/>
</dbReference>
<dbReference type="EMBL" id="BC126251">
    <property type="protein sequence ID" value="AAI26252.1"/>
    <property type="molecule type" value="mRNA"/>
</dbReference>
<dbReference type="EMBL" id="BC143946">
    <property type="protein sequence ID" value="AAI43947.1"/>
    <property type="molecule type" value="mRNA"/>
</dbReference>
<dbReference type="CCDS" id="CCDS31722.1">
    <molecule id="Q14982-2"/>
</dbReference>
<dbReference type="CCDS" id="CCDS81649.1">
    <molecule id="Q14982-3"/>
</dbReference>
<dbReference type="CCDS" id="CCDS8492.1">
    <molecule id="Q14982-1"/>
</dbReference>
<dbReference type="PIR" id="JC4025">
    <property type="entry name" value="JC4025"/>
</dbReference>
<dbReference type="RefSeq" id="NP_001012393.1">
    <molecule id="Q14982-2"/>
    <property type="nucleotide sequence ID" value="NM_001012393.5"/>
</dbReference>
<dbReference type="RefSeq" id="NP_001306032.1">
    <molecule id="Q14982-4"/>
    <property type="nucleotide sequence ID" value="NM_001319103.2"/>
</dbReference>
<dbReference type="RefSeq" id="NP_001306033.1">
    <property type="nucleotide sequence ID" value="NM_001319104.1"/>
</dbReference>
<dbReference type="RefSeq" id="NP_001306034.1">
    <molecule id="Q14982-3"/>
    <property type="nucleotide sequence ID" value="NM_001319105.2"/>
</dbReference>
<dbReference type="RefSeq" id="NP_001306035.1">
    <property type="nucleotide sequence ID" value="NM_001319106.1"/>
</dbReference>
<dbReference type="RefSeq" id="NP_002536.1">
    <molecule id="Q14982-1"/>
    <property type="nucleotide sequence ID" value="NM_002545.5"/>
</dbReference>
<dbReference type="RefSeq" id="XP_011541158.1">
    <property type="nucleotide sequence ID" value="XM_011542856.2"/>
</dbReference>
<dbReference type="RefSeq" id="XP_047282988.1">
    <molecule id="Q14982-3"/>
    <property type="nucleotide sequence ID" value="XM_047427032.1"/>
</dbReference>
<dbReference type="RefSeq" id="XP_054224950.1">
    <molecule id="Q14982-3"/>
    <property type="nucleotide sequence ID" value="XM_054368975.1"/>
</dbReference>
<dbReference type="PDB" id="5UV6">
    <property type="method" value="X-ray"/>
    <property type="resolution" value="2.65 A"/>
    <property type="chains" value="A/B=36-316"/>
</dbReference>
<dbReference type="PDBsum" id="5UV6"/>
<dbReference type="SMR" id="Q14982"/>
<dbReference type="BioGRID" id="111026">
    <property type="interactions" value="18"/>
</dbReference>
<dbReference type="FunCoup" id="Q14982">
    <property type="interactions" value="230"/>
</dbReference>
<dbReference type="IntAct" id="Q14982">
    <property type="interactions" value="15"/>
</dbReference>
<dbReference type="STRING" id="9606.ENSP00000330862"/>
<dbReference type="BindingDB" id="Q14982"/>
<dbReference type="GlyCosmos" id="Q14982">
    <property type="glycosylation" value="6 sites, No reported glycans"/>
</dbReference>
<dbReference type="GlyGen" id="Q14982">
    <property type="glycosylation" value="6 sites"/>
</dbReference>
<dbReference type="iPTMnet" id="Q14982"/>
<dbReference type="PhosphoSitePlus" id="Q14982"/>
<dbReference type="BioMuta" id="OPCML"/>
<dbReference type="DMDM" id="2497326"/>
<dbReference type="MassIVE" id="Q14982"/>
<dbReference type="PaxDb" id="9606-ENSP00000330862"/>
<dbReference type="PeptideAtlas" id="Q14982"/>
<dbReference type="ProteomicsDB" id="3410"/>
<dbReference type="ProteomicsDB" id="60274">
    <molecule id="Q14982-1"/>
</dbReference>
<dbReference type="ProteomicsDB" id="60275">
    <molecule id="Q14982-2"/>
</dbReference>
<dbReference type="ProteomicsDB" id="7231"/>
<dbReference type="Antibodypedia" id="53494">
    <property type="antibodies" value="213 antibodies from 29 providers"/>
</dbReference>
<dbReference type="DNASU" id="4978"/>
<dbReference type="Ensembl" id="ENST00000331898.11">
    <molecule id="Q14982-1"/>
    <property type="protein sequence ID" value="ENSP00000330862.7"/>
    <property type="gene ID" value="ENSG00000183715.15"/>
</dbReference>
<dbReference type="Ensembl" id="ENST00000374778.4">
    <molecule id="Q14982-3"/>
    <property type="protein sequence ID" value="ENSP00000363910.4"/>
    <property type="gene ID" value="ENSG00000183715.15"/>
</dbReference>
<dbReference type="Ensembl" id="ENST00000524381.6">
    <molecule id="Q14982-2"/>
    <property type="protein sequence ID" value="ENSP00000434750.1"/>
    <property type="gene ID" value="ENSG00000183715.15"/>
</dbReference>
<dbReference type="Ensembl" id="ENST00000541867.6">
    <molecule id="Q14982-4"/>
    <property type="protein sequence ID" value="ENSP00000445496.1"/>
    <property type="gene ID" value="ENSG00000183715.15"/>
</dbReference>
<dbReference type="GeneID" id="4978"/>
<dbReference type="KEGG" id="hsa:4978"/>
<dbReference type="MANE-Select" id="ENST00000524381.6">
    <molecule id="Q14982-2"/>
    <property type="protein sequence ID" value="ENSP00000434750.1"/>
    <property type="RefSeq nucleotide sequence ID" value="NM_001012393.5"/>
    <property type="RefSeq protein sequence ID" value="NP_001012393.1"/>
</dbReference>
<dbReference type="UCSC" id="uc001qgs.4">
    <molecule id="Q14982-1"/>
    <property type="organism name" value="human"/>
</dbReference>
<dbReference type="AGR" id="HGNC:8143"/>
<dbReference type="CTD" id="4978"/>
<dbReference type="DisGeNET" id="4978"/>
<dbReference type="GeneCards" id="OPCML"/>
<dbReference type="HGNC" id="HGNC:8143">
    <property type="gene designation" value="OPCML"/>
</dbReference>
<dbReference type="HPA" id="ENSG00000183715">
    <property type="expression patterns" value="Group enriched (brain, parathyroid gland, retina)"/>
</dbReference>
<dbReference type="MalaCards" id="OPCML"/>
<dbReference type="MIM" id="167000">
    <property type="type" value="phenotype"/>
</dbReference>
<dbReference type="MIM" id="600632">
    <property type="type" value="gene"/>
</dbReference>
<dbReference type="neXtProt" id="NX_Q14982"/>
<dbReference type="OpenTargets" id="ENSG00000183715"/>
<dbReference type="PharmGKB" id="PA31930"/>
<dbReference type="VEuPathDB" id="HostDB:ENSG00000183715"/>
<dbReference type="eggNOG" id="KOG3510">
    <property type="taxonomic scope" value="Eukaryota"/>
</dbReference>
<dbReference type="GeneTree" id="ENSGT00940000160304"/>
<dbReference type="HOGENOM" id="CLU_027228_2_2_1"/>
<dbReference type="InParanoid" id="Q14982"/>
<dbReference type="OMA" id="RKYKVGW"/>
<dbReference type="OrthoDB" id="6159398at2759"/>
<dbReference type="PAN-GO" id="Q14982">
    <property type="GO annotations" value="0 GO annotations based on evolutionary models"/>
</dbReference>
<dbReference type="PhylomeDB" id="Q14982"/>
<dbReference type="TreeFam" id="TF325565"/>
<dbReference type="PathwayCommons" id="Q14982"/>
<dbReference type="Reactome" id="R-HSA-163125">
    <property type="pathway name" value="Post-translational modification: synthesis of GPI-anchored proteins"/>
</dbReference>
<dbReference type="SignaLink" id="Q14982"/>
<dbReference type="BioGRID-ORCS" id="4978">
    <property type="hits" value="7 hits in 1151 CRISPR screens"/>
</dbReference>
<dbReference type="CD-CODE" id="FB4E32DD">
    <property type="entry name" value="Presynaptic clusters and postsynaptic densities"/>
</dbReference>
<dbReference type="ChiTaRS" id="OPCML">
    <property type="organism name" value="human"/>
</dbReference>
<dbReference type="GeneWiki" id="OPCML"/>
<dbReference type="GenomeRNAi" id="4978"/>
<dbReference type="Pharos" id="Q14982">
    <property type="development level" value="Tbio"/>
</dbReference>
<dbReference type="PRO" id="PR:Q14982"/>
<dbReference type="Proteomes" id="UP000005640">
    <property type="component" value="Chromosome 11"/>
</dbReference>
<dbReference type="RNAct" id="Q14982">
    <property type="molecule type" value="protein"/>
</dbReference>
<dbReference type="Bgee" id="ENSG00000183715">
    <property type="expression patterns" value="Expressed in Brodmann (1909) area 23 and 142 other cell types or tissues"/>
</dbReference>
<dbReference type="ExpressionAtlas" id="Q14982">
    <property type="expression patterns" value="baseline and differential"/>
</dbReference>
<dbReference type="GO" id="GO:0005576">
    <property type="term" value="C:extracellular region"/>
    <property type="evidence" value="ECO:0000304"/>
    <property type="project" value="Reactome"/>
</dbReference>
<dbReference type="GO" id="GO:0005886">
    <property type="term" value="C:plasma membrane"/>
    <property type="evidence" value="ECO:0000304"/>
    <property type="project" value="Reactome"/>
</dbReference>
<dbReference type="GO" id="GO:0098552">
    <property type="term" value="C:side of membrane"/>
    <property type="evidence" value="ECO:0007669"/>
    <property type="project" value="UniProtKB-KW"/>
</dbReference>
<dbReference type="GO" id="GO:0007155">
    <property type="term" value="P:cell adhesion"/>
    <property type="evidence" value="ECO:0000304"/>
    <property type="project" value="ProtInc"/>
</dbReference>
<dbReference type="GO" id="GO:0008038">
    <property type="term" value="P:neuron recognition"/>
    <property type="evidence" value="ECO:0000304"/>
    <property type="project" value="ProtInc"/>
</dbReference>
<dbReference type="FunFam" id="2.60.40.10:FF:000013">
    <property type="entry name" value="cell adhesion molecule 1 isoform X1"/>
    <property type="match status" value="1"/>
</dbReference>
<dbReference type="FunFam" id="2.60.40.10:FF:000305">
    <property type="entry name" value="neurotrimin isoform X2"/>
    <property type="match status" value="1"/>
</dbReference>
<dbReference type="FunFam" id="2.60.40.10:FF:000113">
    <property type="entry name" value="Opioid-binding protein/cell adhesion molecule"/>
    <property type="match status" value="1"/>
</dbReference>
<dbReference type="Gene3D" id="2.60.40.10">
    <property type="entry name" value="Immunoglobulins"/>
    <property type="match status" value="3"/>
</dbReference>
<dbReference type="InterPro" id="IPR007110">
    <property type="entry name" value="Ig-like_dom"/>
</dbReference>
<dbReference type="InterPro" id="IPR036179">
    <property type="entry name" value="Ig-like_dom_sf"/>
</dbReference>
<dbReference type="InterPro" id="IPR013783">
    <property type="entry name" value="Ig-like_fold"/>
</dbReference>
<dbReference type="InterPro" id="IPR013098">
    <property type="entry name" value="Ig_I-set"/>
</dbReference>
<dbReference type="InterPro" id="IPR003599">
    <property type="entry name" value="Ig_sub"/>
</dbReference>
<dbReference type="InterPro" id="IPR003598">
    <property type="entry name" value="Ig_sub2"/>
</dbReference>
<dbReference type="InterPro" id="IPR050876">
    <property type="entry name" value="IgLON_domain"/>
</dbReference>
<dbReference type="PANTHER" id="PTHR42757">
    <property type="entry name" value="IGLON FAMILY OF IMMUNOGLOBULIN SUPERFAMILY-RELATED"/>
    <property type="match status" value="1"/>
</dbReference>
<dbReference type="PANTHER" id="PTHR42757:SF17">
    <property type="entry name" value="OPIOID-BINDING PROTEIN_CELL ADHESION MOLECULE"/>
    <property type="match status" value="1"/>
</dbReference>
<dbReference type="Pfam" id="PF07679">
    <property type="entry name" value="I-set"/>
    <property type="match status" value="2"/>
</dbReference>
<dbReference type="Pfam" id="PF13927">
    <property type="entry name" value="Ig_3"/>
    <property type="match status" value="1"/>
</dbReference>
<dbReference type="SMART" id="SM00409">
    <property type="entry name" value="IG"/>
    <property type="match status" value="3"/>
</dbReference>
<dbReference type="SMART" id="SM00408">
    <property type="entry name" value="IGc2"/>
    <property type="match status" value="3"/>
</dbReference>
<dbReference type="SUPFAM" id="SSF48726">
    <property type="entry name" value="Immunoglobulin"/>
    <property type="match status" value="3"/>
</dbReference>
<dbReference type="PROSITE" id="PS50835">
    <property type="entry name" value="IG_LIKE"/>
    <property type="match status" value="3"/>
</dbReference>
<proteinExistence type="evidence at protein level"/>
<organism>
    <name type="scientific">Homo sapiens</name>
    <name type="common">Human</name>
    <dbReference type="NCBI Taxonomy" id="9606"/>
    <lineage>
        <taxon>Eukaryota</taxon>
        <taxon>Metazoa</taxon>
        <taxon>Chordata</taxon>
        <taxon>Craniata</taxon>
        <taxon>Vertebrata</taxon>
        <taxon>Euteleostomi</taxon>
        <taxon>Mammalia</taxon>
        <taxon>Eutheria</taxon>
        <taxon>Euarchontoglires</taxon>
        <taxon>Primates</taxon>
        <taxon>Haplorrhini</taxon>
        <taxon>Catarrhini</taxon>
        <taxon>Hominidae</taxon>
        <taxon>Homo</taxon>
    </lineage>
</organism>
<evidence type="ECO:0000250" key="1"/>
<evidence type="ECO:0000255" key="2"/>
<evidence type="ECO:0000255" key="3">
    <source>
        <dbReference type="PROSITE-ProRule" id="PRU00114"/>
    </source>
</evidence>
<evidence type="ECO:0000269" key="4">
    <source>
    </source>
</evidence>
<evidence type="ECO:0000303" key="5">
    <source>
    </source>
</evidence>
<evidence type="ECO:0000303" key="6">
    <source>
    </source>
</evidence>
<evidence type="ECO:0000303" key="7">
    <source>
    </source>
</evidence>
<evidence type="ECO:0000303" key="8">
    <source ref="2"/>
</evidence>
<evidence type="ECO:0000305" key="9"/>
<evidence type="ECO:0007829" key="10">
    <source>
        <dbReference type="PDB" id="5UV6"/>
    </source>
</evidence>
<feature type="signal peptide" evidence="1">
    <location>
        <begin position="1"/>
        <end position="27"/>
    </location>
</feature>
<feature type="chain" id="PRO_0000015118" description="Opioid-binding protein/cell adhesion molecule">
    <location>
        <begin position="28"/>
        <end position="322"/>
    </location>
</feature>
<feature type="propeptide" id="PRO_0000015119" description="Removed in mature form" evidence="2">
    <location>
        <begin position="323"/>
        <end position="345"/>
    </location>
</feature>
<feature type="domain" description="Ig-like C2-type 1">
    <location>
        <begin position="39"/>
        <end position="126"/>
    </location>
</feature>
<feature type="domain" description="Ig-like C2-type 2">
    <location>
        <begin position="136"/>
        <end position="219"/>
    </location>
</feature>
<feature type="domain" description="Ig-like C2-type 3">
    <location>
        <begin position="223"/>
        <end position="310"/>
    </location>
</feature>
<feature type="lipid moiety-binding region" description="GPI-anchor amidated asparagine" evidence="2">
    <location>
        <position position="322"/>
    </location>
</feature>
<feature type="glycosylation site" description="N-linked (GlcNAc...) asparagine" evidence="2">
    <location>
        <position position="44"/>
    </location>
</feature>
<feature type="glycosylation site" description="N-linked (GlcNAc...) asparagine" evidence="2">
    <location>
        <position position="70"/>
    </location>
</feature>
<feature type="glycosylation site" description="N-linked (GlcNAc...) asparagine" evidence="2">
    <location>
        <position position="140"/>
    </location>
</feature>
<feature type="glycosylation site" description="N-linked (GlcNAc...) asparagine" evidence="2">
    <location>
        <position position="285"/>
    </location>
</feature>
<feature type="glycosylation site" description="N-linked (GlcNAc...) asparagine" evidence="2">
    <location>
        <position position="293"/>
    </location>
</feature>
<feature type="glycosylation site" description="N-linked (GlcNAc...) asparagine" evidence="2">
    <location>
        <position position="306"/>
    </location>
</feature>
<feature type="disulfide bond" evidence="3">
    <location>
        <begin position="57"/>
        <end position="115"/>
    </location>
</feature>
<feature type="disulfide bond" evidence="3">
    <location>
        <begin position="157"/>
        <end position="202"/>
    </location>
</feature>
<feature type="disulfide bond" evidence="3">
    <location>
        <begin position="244"/>
        <end position="296"/>
    </location>
</feature>
<feature type="splice variant" id="VSP_047730" description="In isoform 3." evidence="5 8">
    <location>
        <begin position="1"/>
        <end position="41"/>
    </location>
</feature>
<feature type="splice variant" id="VSP_043440" description="In isoform 2." evidence="5 7 8">
    <original>MGVCGYLFLPWKCLVVVSLRLLFLVPT</original>
    <variation>MYHPAYWVVFSATTALLFIP</variation>
    <location>
        <begin position="1"/>
        <end position="27"/>
    </location>
</feature>
<feature type="splice variant" id="VSP_054155" description="In isoform 4." evidence="6">
    <original>Y</original>
    <variation>YEISPSSAVA</variation>
    <location>
        <position position="312"/>
    </location>
</feature>
<feature type="sequence variant" id="VAR_055421" description="In ovarian cancer; somatic mutation; dbSNP:rs137852691." evidence="4">
    <original>P</original>
    <variation>R</variation>
    <location>
        <position position="95"/>
    </location>
</feature>
<feature type="strand" evidence="10">
    <location>
        <begin position="44"/>
        <end position="48"/>
    </location>
</feature>
<feature type="strand" evidence="10">
    <location>
        <begin position="53"/>
        <end position="58"/>
    </location>
</feature>
<feature type="strand" evidence="10">
    <location>
        <begin position="63"/>
        <end position="70"/>
    </location>
</feature>
<feature type="strand" evidence="10">
    <location>
        <begin position="73"/>
        <end position="77"/>
    </location>
</feature>
<feature type="strand" evidence="10">
    <location>
        <begin position="88"/>
        <end position="94"/>
    </location>
</feature>
<feature type="strand" evidence="10">
    <location>
        <begin position="97"/>
        <end position="102"/>
    </location>
</feature>
<feature type="helix" evidence="10">
    <location>
        <begin position="107"/>
        <end position="109"/>
    </location>
</feature>
<feature type="strand" evidence="10">
    <location>
        <begin position="111"/>
        <end position="121"/>
    </location>
</feature>
<feature type="strand" evidence="10">
    <location>
        <begin position="127"/>
        <end position="141"/>
    </location>
</feature>
<feature type="strand" evidence="10">
    <location>
        <begin position="145"/>
        <end position="148"/>
    </location>
</feature>
<feature type="strand" evidence="10">
    <location>
        <begin position="153"/>
        <end position="163"/>
    </location>
</feature>
<feature type="strand" evidence="10">
    <location>
        <begin position="166"/>
        <end position="171"/>
    </location>
</feature>
<feature type="strand" evidence="10">
    <location>
        <begin position="180"/>
        <end position="191"/>
    </location>
</feature>
<feature type="helix" evidence="10">
    <location>
        <begin position="194"/>
        <end position="196"/>
    </location>
</feature>
<feature type="strand" evidence="10">
    <location>
        <begin position="198"/>
        <end position="205"/>
    </location>
</feature>
<feature type="strand" evidence="10">
    <location>
        <begin position="207"/>
        <end position="209"/>
    </location>
</feature>
<feature type="strand" evidence="10">
    <location>
        <begin position="212"/>
        <end position="228"/>
    </location>
</feature>
<feature type="strand" evidence="10">
    <location>
        <begin position="240"/>
        <end position="250"/>
    </location>
</feature>
<feature type="strand" evidence="10">
    <location>
        <begin position="253"/>
        <end position="258"/>
    </location>
</feature>
<feature type="strand" evidence="10">
    <location>
        <begin position="270"/>
        <end position="274"/>
    </location>
</feature>
<feature type="strand" evidence="10">
    <location>
        <begin position="276"/>
        <end position="285"/>
    </location>
</feature>
<feature type="turn" evidence="10">
    <location>
        <begin position="288"/>
        <end position="290"/>
    </location>
</feature>
<feature type="strand" evidence="10">
    <location>
        <begin position="292"/>
        <end position="300"/>
    </location>
</feature>
<feature type="strand" evidence="10">
    <location>
        <begin position="303"/>
        <end position="312"/>
    </location>
</feature>
<comment type="function">
    <text>Binds opioids in the presence of acidic lipids; probably involved in cell contact.</text>
</comment>
<comment type="interaction">
    <interactant intactId="EBI-6447201">
        <id>Q14982</id>
    </interactant>
    <interactant intactId="EBI-10171774">
        <id>P60410</id>
        <label>KRTAP10-8</label>
    </interactant>
    <organismsDiffer>false</organismsDiffer>
    <experiments>3</experiments>
</comment>
<comment type="interaction">
    <interactant intactId="EBI-6447201">
        <id>Q14982</id>
    </interactant>
    <interactant intactId="EBI-11958178">
        <id>Q701N4</id>
        <label>KRTAP5-2</label>
    </interactant>
    <organismsDiffer>false</organismsDiffer>
    <experiments>3</experiments>
</comment>
<comment type="interaction">
    <interactant intactId="EBI-6447201">
        <id>Q14982</id>
    </interactant>
    <interactant intactId="EBI-1042703">
        <id>Q8N1F7</id>
        <label>NUP93</label>
    </interactant>
    <organismsDiffer>false</organismsDiffer>
    <experiments>3</experiments>
</comment>
<comment type="subcellular location">
    <subcellularLocation>
        <location evidence="1">Cell membrane</location>
        <topology evidence="1">Lipid-anchor</topology>
        <topology evidence="1">GPI-anchor</topology>
    </subcellularLocation>
</comment>
<comment type="alternative products">
    <event type="alternative splicing"/>
    <isoform>
        <id>Q14982-1</id>
        <name>1</name>
        <sequence type="displayed"/>
    </isoform>
    <isoform>
        <id>Q14982-2</id>
        <name>2</name>
        <sequence type="described" ref="VSP_043440"/>
    </isoform>
    <isoform>
        <id>Q14982-3</id>
        <name>3</name>
        <sequence type="described" ref="VSP_047730"/>
    </isoform>
    <isoform>
        <id>Q14982-4</id>
        <name>4</name>
        <sequence type="described" ref="VSP_054155"/>
    </isoform>
</comment>
<comment type="disease" evidence="4">
    <disease id="DI-01655">
        <name>Ovarian cancer</name>
        <acronym>OC</acronym>
        <description>The term ovarian cancer defines malignancies originating from ovarian tissue. Although many histologic types of ovarian tumors have been described, epithelial ovarian carcinoma is the most common form. Ovarian cancers are often asymptomatic and the recognized signs and symptoms, even of late-stage disease, are vague. Consequently, most patients are diagnosed with advanced disease.</description>
        <dbReference type="MIM" id="167000"/>
    </disease>
    <text>Disease susceptibility is associated with variants affecting the gene represented in this entry.</text>
</comment>
<comment type="similarity">
    <text evidence="9">Belongs to the immunoglobulin superfamily. IgLON family.</text>
</comment>
<comment type="online information" name="Atlas of Genetics and Cytogenetics in Oncology and Haematology">
    <link uri="https://atlasgeneticsoncology.org/gene/44423/OPCML"/>
</comment>
<reference key="1">
    <citation type="journal article" date="1995" name="Gene">
        <title>Cloning, sequencing and localization to chromosome 11 of a cDNA encoding a human opioid-binding cell adhesion molecule (OBCAM).</title>
        <authorList>
            <person name="Shark K.B."/>
            <person name="Lee N.M."/>
        </authorList>
    </citation>
    <scope>NUCLEOTIDE SEQUENCE [MRNA] (ISOFORM 1)</scope>
    <source>
        <tissue>Occipital cortex</tissue>
    </source>
</reference>
<reference key="2">
    <citation type="submission" date="2008-04" db="EMBL/GenBank/DDBJ databases">
        <title>Multiple promoters and alternative splicing of OPCML.</title>
        <authorList>
            <person name="Cui Y."/>
            <person name="Tao Q."/>
        </authorList>
    </citation>
    <scope>NUCLEOTIDE SEQUENCE [MRNA] (ISOFORMS 2 AND 3)</scope>
</reference>
<reference key="3">
    <citation type="journal article" date="2004" name="Nat. Genet.">
        <title>Complete sequencing and characterization of 21,243 full-length human cDNAs.</title>
        <authorList>
            <person name="Ota T."/>
            <person name="Suzuki Y."/>
            <person name="Nishikawa T."/>
            <person name="Otsuki T."/>
            <person name="Sugiyama T."/>
            <person name="Irie R."/>
            <person name="Wakamatsu A."/>
            <person name="Hayashi K."/>
            <person name="Sato H."/>
            <person name="Nagai K."/>
            <person name="Kimura K."/>
            <person name="Makita H."/>
            <person name="Sekine M."/>
            <person name="Obayashi M."/>
            <person name="Nishi T."/>
            <person name="Shibahara T."/>
            <person name="Tanaka T."/>
            <person name="Ishii S."/>
            <person name="Yamamoto J."/>
            <person name="Saito K."/>
            <person name="Kawai Y."/>
            <person name="Isono Y."/>
            <person name="Nakamura Y."/>
            <person name="Nagahari K."/>
            <person name="Murakami K."/>
            <person name="Yasuda T."/>
            <person name="Iwayanagi T."/>
            <person name="Wagatsuma M."/>
            <person name="Shiratori A."/>
            <person name="Sudo H."/>
            <person name="Hosoiri T."/>
            <person name="Kaku Y."/>
            <person name="Kodaira H."/>
            <person name="Kondo H."/>
            <person name="Sugawara M."/>
            <person name="Takahashi M."/>
            <person name="Kanda K."/>
            <person name="Yokoi T."/>
            <person name="Furuya T."/>
            <person name="Kikkawa E."/>
            <person name="Omura Y."/>
            <person name="Abe K."/>
            <person name="Kamihara K."/>
            <person name="Katsuta N."/>
            <person name="Sato K."/>
            <person name="Tanikawa M."/>
            <person name="Yamazaki M."/>
            <person name="Ninomiya K."/>
            <person name="Ishibashi T."/>
            <person name="Yamashita H."/>
            <person name="Murakawa K."/>
            <person name="Fujimori K."/>
            <person name="Tanai H."/>
            <person name="Kimata M."/>
            <person name="Watanabe M."/>
            <person name="Hiraoka S."/>
            <person name="Chiba Y."/>
            <person name="Ishida S."/>
            <person name="Ono Y."/>
            <person name="Takiguchi S."/>
            <person name="Watanabe S."/>
            <person name="Yosida M."/>
            <person name="Hotuta T."/>
            <person name="Kusano J."/>
            <person name="Kanehori K."/>
            <person name="Takahashi-Fujii A."/>
            <person name="Hara H."/>
            <person name="Tanase T.-O."/>
            <person name="Nomura Y."/>
            <person name="Togiya S."/>
            <person name="Komai F."/>
            <person name="Hara R."/>
            <person name="Takeuchi K."/>
            <person name="Arita M."/>
            <person name="Imose N."/>
            <person name="Musashino K."/>
            <person name="Yuuki H."/>
            <person name="Oshima A."/>
            <person name="Sasaki N."/>
            <person name="Aotsuka S."/>
            <person name="Yoshikawa Y."/>
            <person name="Matsunawa H."/>
            <person name="Ichihara T."/>
            <person name="Shiohata N."/>
            <person name="Sano S."/>
            <person name="Moriya S."/>
            <person name="Momiyama H."/>
            <person name="Satoh N."/>
            <person name="Takami S."/>
            <person name="Terashima Y."/>
            <person name="Suzuki O."/>
            <person name="Nakagawa S."/>
            <person name="Senoh A."/>
            <person name="Mizoguchi H."/>
            <person name="Goto Y."/>
            <person name="Shimizu F."/>
            <person name="Wakebe H."/>
            <person name="Hishigaki H."/>
            <person name="Watanabe T."/>
            <person name="Sugiyama A."/>
            <person name="Takemoto M."/>
            <person name="Kawakami B."/>
            <person name="Yamazaki M."/>
            <person name="Watanabe K."/>
            <person name="Kumagai A."/>
            <person name="Itakura S."/>
            <person name="Fukuzumi Y."/>
            <person name="Fujimori Y."/>
            <person name="Komiyama M."/>
            <person name="Tashiro H."/>
            <person name="Tanigami A."/>
            <person name="Fujiwara T."/>
            <person name="Ono T."/>
            <person name="Yamada K."/>
            <person name="Fujii Y."/>
            <person name="Ozaki K."/>
            <person name="Hirao M."/>
            <person name="Ohmori Y."/>
            <person name="Kawabata A."/>
            <person name="Hikiji T."/>
            <person name="Kobatake N."/>
            <person name="Inagaki H."/>
            <person name="Ikema Y."/>
            <person name="Okamoto S."/>
            <person name="Okitani R."/>
            <person name="Kawakami T."/>
            <person name="Noguchi S."/>
            <person name="Itoh T."/>
            <person name="Shigeta K."/>
            <person name="Senba T."/>
            <person name="Matsumura K."/>
            <person name="Nakajima Y."/>
            <person name="Mizuno T."/>
            <person name="Morinaga M."/>
            <person name="Sasaki M."/>
            <person name="Togashi T."/>
            <person name="Oyama M."/>
            <person name="Hata H."/>
            <person name="Watanabe M."/>
            <person name="Komatsu T."/>
            <person name="Mizushima-Sugano J."/>
            <person name="Satoh T."/>
            <person name="Shirai Y."/>
            <person name="Takahashi Y."/>
            <person name="Nakagawa K."/>
            <person name="Okumura K."/>
            <person name="Nagase T."/>
            <person name="Nomura N."/>
            <person name="Kikuchi H."/>
            <person name="Masuho Y."/>
            <person name="Yamashita R."/>
            <person name="Nakai K."/>
            <person name="Yada T."/>
            <person name="Nakamura Y."/>
            <person name="Ohara O."/>
            <person name="Isogai T."/>
            <person name="Sugano S."/>
        </authorList>
    </citation>
    <scope>NUCLEOTIDE SEQUENCE [LARGE SCALE MRNA] (ISOFORMS 2 AND 3)</scope>
    <source>
        <tissue>Brain</tissue>
        <tissue>Kidney</tissue>
    </source>
</reference>
<reference key="4">
    <citation type="journal article" date="2007" name="BMC Genomics">
        <title>The full-ORF clone resource of the German cDNA consortium.</title>
        <authorList>
            <person name="Bechtel S."/>
            <person name="Rosenfelder H."/>
            <person name="Duda A."/>
            <person name="Schmidt C.P."/>
            <person name="Ernst U."/>
            <person name="Wellenreuther R."/>
            <person name="Mehrle A."/>
            <person name="Schuster C."/>
            <person name="Bahr A."/>
            <person name="Bloecker H."/>
            <person name="Heubner D."/>
            <person name="Hoerlein A."/>
            <person name="Michel G."/>
            <person name="Wedler H."/>
            <person name="Koehrer K."/>
            <person name="Ottenwaelder B."/>
            <person name="Poustka A."/>
            <person name="Wiemann S."/>
            <person name="Schupp I."/>
        </authorList>
    </citation>
    <scope>NUCLEOTIDE SEQUENCE [LARGE SCALE MRNA] (ISOFORM 2)</scope>
    <source>
        <tissue>Amygdala</tissue>
    </source>
</reference>
<reference key="5">
    <citation type="journal article" date="2006" name="Nature">
        <title>Human chromosome 11 DNA sequence and analysis including novel gene identification.</title>
        <authorList>
            <person name="Taylor T.D."/>
            <person name="Noguchi H."/>
            <person name="Totoki Y."/>
            <person name="Toyoda A."/>
            <person name="Kuroki Y."/>
            <person name="Dewar K."/>
            <person name="Lloyd C."/>
            <person name="Itoh T."/>
            <person name="Takeda T."/>
            <person name="Kim D.-W."/>
            <person name="She X."/>
            <person name="Barlow K.F."/>
            <person name="Bloom T."/>
            <person name="Bruford E."/>
            <person name="Chang J.L."/>
            <person name="Cuomo C.A."/>
            <person name="Eichler E."/>
            <person name="FitzGerald M.G."/>
            <person name="Jaffe D.B."/>
            <person name="LaButti K."/>
            <person name="Nicol R."/>
            <person name="Park H.-S."/>
            <person name="Seaman C."/>
            <person name="Sougnez C."/>
            <person name="Yang X."/>
            <person name="Zimmer A.R."/>
            <person name="Zody M.C."/>
            <person name="Birren B.W."/>
            <person name="Nusbaum C."/>
            <person name="Fujiyama A."/>
            <person name="Hattori M."/>
            <person name="Rogers J."/>
            <person name="Lander E.S."/>
            <person name="Sakaki Y."/>
        </authorList>
    </citation>
    <scope>NUCLEOTIDE SEQUENCE [LARGE SCALE GENOMIC DNA]</scope>
</reference>
<reference key="6">
    <citation type="journal article" date="2004" name="Genome Res.">
        <title>The status, quality, and expansion of the NIH full-length cDNA project: the Mammalian Gene Collection (MGC).</title>
        <authorList>
            <consortium name="The MGC Project Team"/>
        </authorList>
    </citation>
    <scope>NUCLEOTIDE SEQUENCE [LARGE SCALE MRNA] (ISOFORMS 1 AND 4)</scope>
    <source>
        <tissue>Brain</tissue>
        <tissue>Fetal brain</tissue>
    </source>
</reference>
<reference key="7">
    <citation type="journal article" date="2003" name="Nat. Genet.">
        <title>OPCML at 11q25 is epigenetically inactivated and has tumor-suppressor function in epithelial ovarian cancer.</title>
        <authorList>
            <person name="Sellar G.C."/>
            <person name="Watt K.P."/>
            <person name="Rabiasz G.J."/>
            <person name="Stronach E.A."/>
            <person name="Li L."/>
            <person name="Miller E.P."/>
            <person name="Massie C.E."/>
            <person name="Miller J."/>
            <person name="Contreras-Moreira B."/>
            <person name="Scott D."/>
            <person name="Brown I."/>
            <person name="Williams A.R."/>
            <person name="Bates P.A."/>
            <person name="Smyth J.F."/>
            <person name="Gabra H."/>
        </authorList>
    </citation>
    <scope>VARIANT OVARIAN CANCER ARG-95</scope>
</reference>